<feature type="chain" id="PRO_1000008820" description="Elongation factor G">
    <location>
        <begin position="1"/>
        <end position="699"/>
    </location>
</feature>
<feature type="domain" description="tr-type G">
    <location>
        <begin position="8"/>
        <end position="290"/>
    </location>
</feature>
<feature type="binding site" evidence="1">
    <location>
        <begin position="17"/>
        <end position="24"/>
    </location>
    <ligand>
        <name>GTP</name>
        <dbReference type="ChEBI" id="CHEBI:37565"/>
    </ligand>
</feature>
<feature type="binding site" evidence="1">
    <location>
        <begin position="88"/>
        <end position="92"/>
    </location>
    <ligand>
        <name>GTP</name>
        <dbReference type="ChEBI" id="CHEBI:37565"/>
    </ligand>
</feature>
<feature type="binding site" evidence="1">
    <location>
        <begin position="142"/>
        <end position="145"/>
    </location>
    <ligand>
        <name>GTP</name>
        <dbReference type="ChEBI" id="CHEBI:37565"/>
    </ligand>
</feature>
<protein>
    <recommendedName>
        <fullName evidence="1">Elongation factor G</fullName>
        <shortName evidence="1">EF-G</shortName>
    </recommendedName>
</protein>
<dbReference type="EMBL" id="CP000513">
    <property type="protein sequence ID" value="ABQ13872.1"/>
    <property type="molecule type" value="Genomic_DNA"/>
</dbReference>
<dbReference type="RefSeq" id="WP_012031573.1">
    <property type="nucleotide sequence ID" value="NC_009446.1"/>
</dbReference>
<dbReference type="SMR" id="A5EX85"/>
<dbReference type="STRING" id="246195.DNO_1278"/>
<dbReference type="KEGG" id="dno:DNO_1278"/>
<dbReference type="eggNOG" id="COG0480">
    <property type="taxonomic scope" value="Bacteria"/>
</dbReference>
<dbReference type="HOGENOM" id="CLU_002794_4_1_6"/>
<dbReference type="OrthoDB" id="9804431at2"/>
<dbReference type="Proteomes" id="UP000000248">
    <property type="component" value="Chromosome"/>
</dbReference>
<dbReference type="GO" id="GO:0005737">
    <property type="term" value="C:cytoplasm"/>
    <property type="evidence" value="ECO:0007669"/>
    <property type="project" value="UniProtKB-SubCell"/>
</dbReference>
<dbReference type="GO" id="GO:0005525">
    <property type="term" value="F:GTP binding"/>
    <property type="evidence" value="ECO:0007669"/>
    <property type="project" value="UniProtKB-UniRule"/>
</dbReference>
<dbReference type="GO" id="GO:0003924">
    <property type="term" value="F:GTPase activity"/>
    <property type="evidence" value="ECO:0007669"/>
    <property type="project" value="InterPro"/>
</dbReference>
<dbReference type="GO" id="GO:0097216">
    <property type="term" value="F:guanosine tetraphosphate binding"/>
    <property type="evidence" value="ECO:0007669"/>
    <property type="project" value="UniProtKB-ARBA"/>
</dbReference>
<dbReference type="GO" id="GO:0003746">
    <property type="term" value="F:translation elongation factor activity"/>
    <property type="evidence" value="ECO:0007669"/>
    <property type="project" value="UniProtKB-UniRule"/>
</dbReference>
<dbReference type="GO" id="GO:0032790">
    <property type="term" value="P:ribosome disassembly"/>
    <property type="evidence" value="ECO:0007669"/>
    <property type="project" value="TreeGrafter"/>
</dbReference>
<dbReference type="CDD" id="cd01886">
    <property type="entry name" value="EF-G"/>
    <property type="match status" value="1"/>
</dbReference>
<dbReference type="CDD" id="cd16262">
    <property type="entry name" value="EFG_III"/>
    <property type="match status" value="1"/>
</dbReference>
<dbReference type="CDD" id="cd01434">
    <property type="entry name" value="EFG_mtEFG1_IV"/>
    <property type="match status" value="1"/>
</dbReference>
<dbReference type="CDD" id="cd03713">
    <property type="entry name" value="EFG_mtEFG_C"/>
    <property type="match status" value="1"/>
</dbReference>
<dbReference type="CDD" id="cd04088">
    <property type="entry name" value="EFG_mtEFG_II"/>
    <property type="match status" value="1"/>
</dbReference>
<dbReference type="FunFam" id="2.40.30.10:FF:000006">
    <property type="entry name" value="Elongation factor G"/>
    <property type="match status" value="1"/>
</dbReference>
<dbReference type="FunFam" id="3.30.230.10:FF:000003">
    <property type="entry name" value="Elongation factor G"/>
    <property type="match status" value="1"/>
</dbReference>
<dbReference type="FunFam" id="3.30.70.240:FF:000001">
    <property type="entry name" value="Elongation factor G"/>
    <property type="match status" value="1"/>
</dbReference>
<dbReference type="FunFam" id="3.30.70.870:FF:000001">
    <property type="entry name" value="Elongation factor G"/>
    <property type="match status" value="1"/>
</dbReference>
<dbReference type="FunFam" id="3.40.50.300:FF:000029">
    <property type="entry name" value="Elongation factor G"/>
    <property type="match status" value="1"/>
</dbReference>
<dbReference type="Gene3D" id="3.30.230.10">
    <property type="match status" value="1"/>
</dbReference>
<dbReference type="Gene3D" id="3.30.70.240">
    <property type="match status" value="1"/>
</dbReference>
<dbReference type="Gene3D" id="3.30.70.870">
    <property type="entry name" value="Elongation Factor G (Translational Gtpase), domain 3"/>
    <property type="match status" value="1"/>
</dbReference>
<dbReference type="Gene3D" id="3.40.50.300">
    <property type="entry name" value="P-loop containing nucleotide triphosphate hydrolases"/>
    <property type="match status" value="1"/>
</dbReference>
<dbReference type="Gene3D" id="2.40.30.10">
    <property type="entry name" value="Translation factors"/>
    <property type="match status" value="1"/>
</dbReference>
<dbReference type="HAMAP" id="MF_00054_B">
    <property type="entry name" value="EF_G_EF_2_B"/>
    <property type="match status" value="1"/>
</dbReference>
<dbReference type="InterPro" id="IPR041095">
    <property type="entry name" value="EFG_II"/>
</dbReference>
<dbReference type="InterPro" id="IPR009022">
    <property type="entry name" value="EFG_III"/>
</dbReference>
<dbReference type="InterPro" id="IPR035647">
    <property type="entry name" value="EFG_III/V"/>
</dbReference>
<dbReference type="InterPro" id="IPR047872">
    <property type="entry name" value="EFG_IV"/>
</dbReference>
<dbReference type="InterPro" id="IPR035649">
    <property type="entry name" value="EFG_V"/>
</dbReference>
<dbReference type="InterPro" id="IPR000640">
    <property type="entry name" value="EFG_V-like"/>
</dbReference>
<dbReference type="InterPro" id="IPR004161">
    <property type="entry name" value="EFTu-like_2"/>
</dbReference>
<dbReference type="InterPro" id="IPR031157">
    <property type="entry name" value="G_TR_CS"/>
</dbReference>
<dbReference type="InterPro" id="IPR027417">
    <property type="entry name" value="P-loop_NTPase"/>
</dbReference>
<dbReference type="InterPro" id="IPR020568">
    <property type="entry name" value="Ribosomal_Su5_D2-typ_SF"/>
</dbReference>
<dbReference type="InterPro" id="IPR014721">
    <property type="entry name" value="Ribsml_uS5_D2-typ_fold_subgr"/>
</dbReference>
<dbReference type="InterPro" id="IPR005225">
    <property type="entry name" value="Small_GTP-bd"/>
</dbReference>
<dbReference type="InterPro" id="IPR000795">
    <property type="entry name" value="T_Tr_GTP-bd_dom"/>
</dbReference>
<dbReference type="InterPro" id="IPR009000">
    <property type="entry name" value="Transl_B-barrel_sf"/>
</dbReference>
<dbReference type="InterPro" id="IPR004540">
    <property type="entry name" value="Transl_elong_EFG/EF2"/>
</dbReference>
<dbReference type="InterPro" id="IPR005517">
    <property type="entry name" value="Transl_elong_EFG/EF2_IV"/>
</dbReference>
<dbReference type="NCBIfam" id="TIGR00484">
    <property type="entry name" value="EF-G"/>
    <property type="match status" value="1"/>
</dbReference>
<dbReference type="NCBIfam" id="NF009381">
    <property type="entry name" value="PRK12740.1-5"/>
    <property type="match status" value="1"/>
</dbReference>
<dbReference type="NCBIfam" id="TIGR00231">
    <property type="entry name" value="small_GTP"/>
    <property type="match status" value="1"/>
</dbReference>
<dbReference type="PANTHER" id="PTHR43261:SF1">
    <property type="entry name" value="RIBOSOME-RELEASING FACTOR 2, MITOCHONDRIAL"/>
    <property type="match status" value="1"/>
</dbReference>
<dbReference type="PANTHER" id="PTHR43261">
    <property type="entry name" value="TRANSLATION ELONGATION FACTOR G-RELATED"/>
    <property type="match status" value="1"/>
</dbReference>
<dbReference type="Pfam" id="PF00679">
    <property type="entry name" value="EFG_C"/>
    <property type="match status" value="1"/>
</dbReference>
<dbReference type="Pfam" id="PF14492">
    <property type="entry name" value="EFG_III"/>
    <property type="match status" value="1"/>
</dbReference>
<dbReference type="Pfam" id="PF03764">
    <property type="entry name" value="EFG_IV"/>
    <property type="match status" value="1"/>
</dbReference>
<dbReference type="Pfam" id="PF00009">
    <property type="entry name" value="GTP_EFTU"/>
    <property type="match status" value="1"/>
</dbReference>
<dbReference type="Pfam" id="PF03144">
    <property type="entry name" value="GTP_EFTU_D2"/>
    <property type="match status" value="1"/>
</dbReference>
<dbReference type="PRINTS" id="PR00315">
    <property type="entry name" value="ELONGATNFCT"/>
</dbReference>
<dbReference type="SMART" id="SM00838">
    <property type="entry name" value="EFG_C"/>
    <property type="match status" value="1"/>
</dbReference>
<dbReference type="SMART" id="SM00889">
    <property type="entry name" value="EFG_IV"/>
    <property type="match status" value="1"/>
</dbReference>
<dbReference type="SUPFAM" id="SSF54980">
    <property type="entry name" value="EF-G C-terminal domain-like"/>
    <property type="match status" value="2"/>
</dbReference>
<dbReference type="SUPFAM" id="SSF52540">
    <property type="entry name" value="P-loop containing nucleoside triphosphate hydrolases"/>
    <property type="match status" value="1"/>
</dbReference>
<dbReference type="SUPFAM" id="SSF54211">
    <property type="entry name" value="Ribosomal protein S5 domain 2-like"/>
    <property type="match status" value="1"/>
</dbReference>
<dbReference type="SUPFAM" id="SSF50447">
    <property type="entry name" value="Translation proteins"/>
    <property type="match status" value="1"/>
</dbReference>
<dbReference type="PROSITE" id="PS00301">
    <property type="entry name" value="G_TR_1"/>
    <property type="match status" value="1"/>
</dbReference>
<dbReference type="PROSITE" id="PS51722">
    <property type="entry name" value="G_TR_2"/>
    <property type="match status" value="1"/>
</dbReference>
<gene>
    <name evidence="1" type="primary">fusA</name>
    <name type="ordered locus">DNO_1278</name>
</gene>
<name>EFG_DICNV</name>
<sequence length="699" mass="77503">MARETSINKYRNLGIMAHIDAGKTTTTERILFYTGVSHKLGEVHEGAATMDWMEQEQERGITITSAATTCFWQGMAGQFDKHRINIIDTPGHVDFTIEVERSLRVLDGACLVLCSVGGVQPQTETVWRQANKYKVPRIAYVNKMDRTGANFLRVVKQMHDRLKANAVPLQLPVGAEDTFKGVVDLIKMKEIIWDEETNGLKFEYGDIPEEMRAQAEEYREKLVEAAAESSEELMDKYLESGTLSEEEIIAGLRQRTIANEIIPVLCGSSFKNKGVQAMLDKVIELLPSPVDVPAIQGVNPNTNETEKRESTDDAPFSALAFKIATDPFVGTLTFVRCYSGVLEAGTTVLNSVKDKKERIGRIVQMHSNSRVEIKEVHAGDIAACIGLKEVVTGETLCDVNAPIILERMEFPEPVIAVAVEPKTKADQEKMGLALAKLAQEDPSFRVHTDEETGQTIISGMGELHLEIIVDRMKREFKVEANVGAPQVAYRETIRESVEQEGKFVRQSGGRGQFGHVWLRIEPQEPGFGYEFVNQIVGGVVPKEYIPAVDKGVQEQMQNGVLAGYPVVDIKVTLYDGSYHEVDSSEMAFKLAAAEGFKLGARKAKPVLLEPMMKVEVSTPEEYMGDVIGDLNSRRGLIQGMDDELTGKVIHAQVPLANMFGYATSLRSLTQGRANYSMEFDCYNEAPNNVVEEVIKSKSK</sequence>
<proteinExistence type="inferred from homology"/>
<organism>
    <name type="scientific">Dichelobacter nodosus (strain VCS1703A)</name>
    <dbReference type="NCBI Taxonomy" id="246195"/>
    <lineage>
        <taxon>Bacteria</taxon>
        <taxon>Pseudomonadati</taxon>
        <taxon>Pseudomonadota</taxon>
        <taxon>Gammaproteobacteria</taxon>
        <taxon>Cardiobacteriales</taxon>
        <taxon>Cardiobacteriaceae</taxon>
        <taxon>Dichelobacter</taxon>
    </lineage>
</organism>
<keyword id="KW-0963">Cytoplasm</keyword>
<keyword id="KW-0251">Elongation factor</keyword>
<keyword id="KW-0342">GTP-binding</keyword>
<keyword id="KW-0547">Nucleotide-binding</keyword>
<keyword id="KW-0648">Protein biosynthesis</keyword>
<keyword id="KW-1185">Reference proteome</keyword>
<accession>A5EX85</accession>
<comment type="function">
    <text evidence="1">Catalyzes the GTP-dependent ribosomal translocation step during translation elongation. During this step, the ribosome changes from the pre-translocational (PRE) to the post-translocational (POST) state as the newly formed A-site-bound peptidyl-tRNA and P-site-bound deacylated tRNA move to the P and E sites, respectively. Catalyzes the coordinated movement of the two tRNA molecules, the mRNA and conformational changes in the ribosome.</text>
</comment>
<comment type="subcellular location">
    <subcellularLocation>
        <location evidence="1">Cytoplasm</location>
    </subcellularLocation>
</comment>
<comment type="similarity">
    <text evidence="1">Belongs to the TRAFAC class translation factor GTPase superfamily. Classic translation factor GTPase family. EF-G/EF-2 subfamily.</text>
</comment>
<reference key="1">
    <citation type="journal article" date="2007" name="Nat. Biotechnol.">
        <title>Genome sequence and identification of candidate vaccine antigens from the animal pathogen Dichelobacter nodosus.</title>
        <authorList>
            <person name="Myers G.S.A."/>
            <person name="Parker D."/>
            <person name="Al-Hasani K."/>
            <person name="Kennan R.M."/>
            <person name="Seemann T."/>
            <person name="Ren Q."/>
            <person name="Badger J.H."/>
            <person name="Selengut J.D."/>
            <person name="Deboy R.T."/>
            <person name="Tettelin H."/>
            <person name="Boyce J.D."/>
            <person name="McCarl V.P."/>
            <person name="Han X."/>
            <person name="Nelson W.C."/>
            <person name="Madupu R."/>
            <person name="Mohamoud Y."/>
            <person name="Holley T."/>
            <person name="Fedorova N."/>
            <person name="Khouri H."/>
            <person name="Bottomley S.P."/>
            <person name="Whittington R.J."/>
            <person name="Adler B."/>
            <person name="Songer J.G."/>
            <person name="Rood J.I."/>
            <person name="Paulsen I.T."/>
        </authorList>
    </citation>
    <scope>NUCLEOTIDE SEQUENCE [LARGE SCALE GENOMIC DNA]</scope>
    <source>
        <strain>VCS1703A</strain>
    </source>
</reference>
<evidence type="ECO:0000255" key="1">
    <source>
        <dbReference type="HAMAP-Rule" id="MF_00054"/>
    </source>
</evidence>